<protein>
    <recommendedName>
        <fullName>Phosphatase and actin regulator 1</fullName>
    </recommendedName>
</protein>
<dbReference type="EMBL" id="AY993932">
    <property type="protein sequence ID" value="AAY42814.1"/>
    <property type="molecule type" value="mRNA"/>
</dbReference>
<dbReference type="EMBL" id="AC140415">
    <property type="status" value="NOT_ANNOTATED_CDS"/>
    <property type="molecule type" value="Genomic_DNA"/>
</dbReference>
<dbReference type="EMBL" id="AC154505">
    <property type="status" value="NOT_ANNOTATED_CDS"/>
    <property type="molecule type" value="Genomic_DNA"/>
</dbReference>
<dbReference type="EMBL" id="AC164878">
    <property type="status" value="NOT_ANNOTATED_CDS"/>
    <property type="molecule type" value="Genomic_DNA"/>
</dbReference>
<dbReference type="EMBL" id="CT025549">
    <property type="status" value="NOT_ANNOTATED_CDS"/>
    <property type="molecule type" value="Genomic_DNA"/>
</dbReference>
<dbReference type="EMBL" id="CH466546">
    <property type="protein sequence ID" value="EDL40986.1"/>
    <property type="molecule type" value="Genomic_DNA"/>
</dbReference>
<dbReference type="EMBL" id="BC048407">
    <property type="protein sequence ID" value="AAH48407.1"/>
    <property type="status" value="ALT_INIT"/>
    <property type="molecule type" value="mRNA"/>
</dbReference>
<dbReference type="EMBL" id="BC061691">
    <property type="protein sequence ID" value="AAH61691.1"/>
    <property type="status" value="ALT_INIT"/>
    <property type="molecule type" value="mRNA"/>
</dbReference>
<dbReference type="EMBL" id="AK048208">
    <property type="protein sequence ID" value="BAC33272.1"/>
    <property type="status" value="ALT_INIT"/>
    <property type="molecule type" value="mRNA"/>
</dbReference>
<dbReference type="CCDS" id="CCDS49251.1">
    <molecule id="Q2M3X8-3"/>
</dbReference>
<dbReference type="CCDS" id="CCDS79181.1">
    <molecule id="Q2M3X8-1"/>
</dbReference>
<dbReference type="RefSeq" id="NP_001005740.1">
    <molecule id="Q2M3X8-3"/>
    <property type="nucleotide sequence ID" value="NM_001005740.1"/>
</dbReference>
<dbReference type="RefSeq" id="NP_001289564.1">
    <molecule id="Q2M3X8-1"/>
    <property type="nucleotide sequence ID" value="NM_001302635.1"/>
</dbReference>
<dbReference type="RefSeq" id="NP_001289565.1">
    <property type="nucleotide sequence ID" value="NM_001302636.1"/>
</dbReference>
<dbReference type="RefSeq" id="XP_006516968.1">
    <molecule id="Q2M3X8-4"/>
    <property type="nucleotide sequence ID" value="XM_006516905.5"/>
</dbReference>
<dbReference type="RefSeq" id="XP_006516969.1">
    <molecule id="Q2M3X8-4"/>
    <property type="nucleotide sequence ID" value="XM_006516906.5"/>
</dbReference>
<dbReference type="RefSeq" id="XP_011242697.1">
    <molecule id="Q2M3X8-4"/>
    <property type="nucleotide sequence ID" value="XM_011244395.4"/>
</dbReference>
<dbReference type="RefSeq" id="XP_017170971.1">
    <property type="nucleotide sequence ID" value="XM_017315482.1"/>
</dbReference>
<dbReference type="RefSeq" id="XP_017170972.1">
    <property type="nucleotide sequence ID" value="XM_017315483.1"/>
</dbReference>
<dbReference type="RefSeq" id="XP_036013881.1">
    <molecule id="Q2M3X8-1"/>
    <property type="nucleotide sequence ID" value="XM_036157988.1"/>
</dbReference>
<dbReference type="RefSeq" id="XP_036013882.1">
    <molecule id="Q2M3X8-1"/>
    <property type="nucleotide sequence ID" value="XM_036157989.1"/>
</dbReference>
<dbReference type="RefSeq" id="XP_036013883.1">
    <molecule id="Q2M3X8-1"/>
    <property type="nucleotide sequence ID" value="XM_036157990.1"/>
</dbReference>
<dbReference type="PDB" id="4B1U">
    <property type="method" value="X-ray"/>
    <property type="resolution" value="2.00 A"/>
    <property type="chains" value="M=133-164"/>
</dbReference>
<dbReference type="PDB" id="4B1V">
    <property type="method" value="X-ray"/>
    <property type="resolution" value="1.75 A"/>
    <property type="chains" value="M/N=133-164"/>
</dbReference>
<dbReference type="PDB" id="4B1W">
    <property type="method" value="X-ray"/>
    <property type="resolution" value="1.95 A"/>
    <property type="chains" value="M=417-448"/>
</dbReference>
<dbReference type="PDB" id="4B1X">
    <property type="method" value="X-ray"/>
    <property type="resolution" value="1.80 A"/>
    <property type="chains" value="M=455-486"/>
</dbReference>
<dbReference type="PDB" id="4B1Y">
    <property type="method" value="X-ray"/>
    <property type="resolution" value="1.29 A"/>
    <property type="chains" value="M=493-524"/>
</dbReference>
<dbReference type="PDB" id="4B1Z">
    <property type="method" value="X-ray"/>
    <property type="resolution" value="3.30 A"/>
    <property type="chains" value="M/N=414-528"/>
</dbReference>
<dbReference type="PDBsum" id="4B1U"/>
<dbReference type="PDBsum" id="4B1V"/>
<dbReference type="PDBsum" id="4B1W"/>
<dbReference type="PDBsum" id="4B1X"/>
<dbReference type="PDBsum" id="4B1Y"/>
<dbReference type="PDBsum" id="4B1Z"/>
<dbReference type="SMR" id="Q2M3X8"/>
<dbReference type="BioGRID" id="229998">
    <property type="interactions" value="6"/>
</dbReference>
<dbReference type="FunCoup" id="Q2M3X8">
    <property type="interactions" value="1326"/>
</dbReference>
<dbReference type="IntAct" id="Q2M3X8">
    <property type="interactions" value="4"/>
</dbReference>
<dbReference type="MINT" id="Q2M3X8"/>
<dbReference type="STRING" id="10090.ENSMUSP00000115228"/>
<dbReference type="GlyGen" id="Q2M3X8">
    <property type="glycosylation" value="1 site, 1 O-linked glycan (1 site)"/>
</dbReference>
<dbReference type="iPTMnet" id="Q2M3X8"/>
<dbReference type="PhosphoSitePlus" id="Q2M3X8"/>
<dbReference type="SwissPalm" id="Q2M3X8"/>
<dbReference type="jPOST" id="Q2M3X8"/>
<dbReference type="PeptideAtlas" id="Q2M3X8"/>
<dbReference type="ProteomicsDB" id="289484">
    <molecule id="Q2M3X8-1"/>
</dbReference>
<dbReference type="ProteomicsDB" id="289485">
    <molecule id="Q2M3X8-2"/>
</dbReference>
<dbReference type="ProteomicsDB" id="289486">
    <molecule id="Q2M3X8-3"/>
</dbReference>
<dbReference type="ProteomicsDB" id="289487">
    <molecule id="Q2M3X8-4"/>
</dbReference>
<dbReference type="Antibodypedia" id="24916">
    <property type="antibodies" value="64 antibodies from 21 providers"/>
</dbReference>
<dbReference type="DNASU" id="218194"/>
<dbReference type="Ensembl" id="ENSMUST00000066928.12">
    <molecule id="Q2M3X8-2"/>
    <property type="protein sequence ID" value="ENSMUSP00000066663.6"/>
    <property type="gene ID" value="ENSMUSG00000054728.18"/>
</dbReference>
<dbReference type="Ensembl" id="ENSMUST00000110161.10">
    <molecule id="Q2M3X8-4"/>
    <property type="protein sequence ID" value="ENSMUSP00000105790.4"/>
    <property type="gene ID" value="ENSMUSG00000054728.18"/>
</dbReference>
<dbReference type="Ensembl" id="ENSMUST00000128646.8">
    <molecule id="Q2M3X8-1"/>
    <property type="protein sequence ID" value="ENSMUSP00000122232.2"/>
    <property type="gene ID" value="ENSMUSG00000054728.18"/>
</dbReference>
<dbReference type="Ensembl" id="ENSMUST00000148891.8">
    <molecule id="Q2M3X8-3"/>
    <property type="protein sequence ID" value="ENSMUSP00000115228.2"/>
    <property type="gene ID" value="ENSMUSG00000054728.18"/>
</dbReference>
<dbReference type="Ensembl" id="ENSMUST00000149235.8">
    <molecule id="Q2M3X8-1"/>
    <property type="protein sequence ID" value="ENSMUSP00000115207.2"/>
    <property type="gene ID" value="ENSMUSG00000054728.18"/>
</dbReference>
<dbReference type="GeneID" id="218194"/>
<dbReference type="KEGG" id="mmu:218194"/>
<dbReference type="UCSC" id="uc007qfo.2">
    <molecule id="Q2M3X8-1"/>
    <property type="organism name" value="mouse"/>
</dbReference>
<dbReference type="UCSC" id="uc007qfp.1">
    <molecule id="Q2M3X8-3"/>
    <property type="organism name" value="mouse"/>
</dbReference>
<dbReference type="UCSC" id="uc007qfq.1">
    <molecule id="Q2M3X8-2"/>
    <property type="organism name" value="mouse"/>
</dbReference>
<dbReference type="AGR" id="MGI:2659021"/>
<dbReference type="CTD" id="221692"/>
<dbReference type="MGI" id="MGI:2659021">
    <property type="gene designation" value="Phactr1"/>
</dbReference>
<dbReference type="VEuPathDB" id="HostDB:ENSMUSG00000054728"/>
<dbReference type="GeneTree" id="ENSGT00940000155842"/>
<dbReference type="HOGENOM" id="CLU_015753_3_0_1"/>
<dbReference type="InParanoid" id="Q2M3X8"/>
<dbReference type="OMA" id="MIRCQIG"/>
<dbReference type="OrthoDB" id="81019at9989"/>
<dbReference type="PhylomeDB" id="Q2M3X8"/>
<dbReference type="TreeFam" id="TF316316"/>
<dbReference type="BioGRID-ORCS" id="218194">
    <property type="hits" value="2 hits in 76 CRISPR screens"/>
</dbReference>
<dbReference type="CD-CODE" id="CE726F99">
    <property type="entry name" value="Postsynaptic density"/>
</dbReference>
<dbReference type="ChiTaRS" id="Phactr1">
    <property type="organism name" value="mouse"/>
</dbReference>
<dbReference type="EvolutionaryTrace" id="Q2M3X8"/>
<dbReference type="PRO" id="PR:Q2M3X8"/>
<dbReference type="Proteomes" id="UP000000589">
    <property type="component" value="Chromosome 13"/>
</dbReference>
<dbReference type="RNAct" id="Q2M3X8">
    <property type="molecule type" value="protein"/>
</dbReference>
<dbReference type="Bgee" id="ENSMUSG00000054728">
    <property type="expression patterns" value="Expressed in nucleus accumbens and 220 other cell types or tissues"/>
</dbReference>
<dbReference type="ExpressionAtlas" id="Q2M3X8">
    <property type="expression patterns" value="baseline and differential"/>
</dbReference>
<dbReference type="GO" id="GO:0005829">
    <property type="term" value="C:cytosol"/>
    <property type="evidence" value="ECO:0000314"/>
    <property type="project" value="UniProtKB"/>
</dbReference>
<dbReference type="GO" id="GO:0005634">
    <property type="term" value="C:nucleus"/>
    <property type="evidence" value="ECO:0000314"/>
    <property type="project" value="UniProtKB"/>
</dbReference>
<dbReference type="GO" id="GO:0045202">
    <property type="term" value="C:synapse"/>
    <property type="evidence" value="ECO:0007669"/>
    <property type="project" value="UniProtKB-SubCell"/>
</dbReference>
<dbReference type="GO" id="GO:0003779">
    <property type="term" value="F:actin binding"/>
    <property type="evidence" value="ECO:0000314"/>
    <property type="project" value="UniProtKB"/>
</dbReference>
<dbReference type="GO" id="GO:0004864">
    <property type="term" value="F:protein phosphatase inhibitor activity"/>
    <property type="evidence" value="ECO:0007669"/>
    <property type="project" value="UniProtKB-KW"/>
</dbReference>
<dbReference type="GO" id="GO:0030036">
    <property type="term" value="P:actin cytoskeleton organization"/>
    <property type="evidence" value="ECO:0000315"/>
    <property type="project" value="UniProtKB"/>
</dbReference>
<dbReference type="GO" id="GO:0031032">
    <property type="term" value="P:actomyosin structure organization"/>
    <property type="evidence" value="ECO:0000315"/>
    <property type="project" value="UniProtKB"/>
</dbReference>
<dbReference type="GO" id="GO:0048870">
    <property type="term" value="P:cell motility"/>
    <property type="evidence" value="ECO:0007669"/>
    <property type="project" value="Ensembl"/>
</dbReference>
<dbReference type="GO" id="GO:0021987">
    <property type="term" value="P:cerebral cortex development"/>
    <property type="evidence" value="ECO:0000315"/>
    <property type="project" value="UniProtKB"/>
</dbReference>
<dbReference type="GO" id="GO:0140059">
    <property type="term" value="P:dendrite arborization"/>
    <property type="evidence" value="ECO:0000315"/>
    <property type="project" value="UniProtKB"/>
</dbReference>
<dbReference type="GO" id="GO:2001222">
    <property type="term" value="P:regulation of neuron migration"/>
    <property type="evidence" value="ECO:0000315"/>
    <property type="project" value="UniProtKB"/>
</dbReference>
<dbReference type="GO" id="GO:0043149">
    <property type="term" value="P:stress fiber assembly"/>
    <property type="evidence" value="ECO:0000315"/>
    <property type="project" value="UniProtKB"/>
</dbReference>
<dbReference type="Gene3D" id="6.10.140.1750">
    <property type="match status" value="1"/>
</dbReference>
<dbReference type="Gene3D" id="6.10.140.2130">
    <property type="match status" value="1"/>
</dbReference>
<dbReference type="InterPro" id="IPR004018">
    <property type="entry name" value="RPEL_repeat"/>
</dbReference>
<dbReference type="PANTHER" id="PTHR12751:SF6">
    <property type="entry name" value="PHOSPHATASE AND ACTIN REGULATOR 1"/>
    <property type="match status" value="1"/>
</dbReference>
<dbReference type="PANTHER" id="PTHR12751">
    <property type="entry name" value="PHOSPHATASE AND ACTIN REGULATOR PHACTR"/>
    <property type="match status" value="1"/>
</dbReference>
<dbReference type="Pfam" id="PF02755">
    <property type="entry name" value="RPEL"/>
    <property type="match status" value="4"/>
</dbReference>
<dbReference type="SMART" id="SM00707">
    <property type="entry name" value="RPEL"/>
    <property type="match status" value="4"/>
</dbReference>
<dbReference type="PROSITE" id="PS51073">
    <property type="entry name" value="RPEL"/>
    <property type="match status" value="4"/>
</dbReference>
<sequence length="580" mass="66286">MDYPKMDYFLDVESAHRLLDVESAQRFFYSQGAQARRATLLLPPTLMAASSEDDIDRRPIRRVRSKSDTPYLAEARISFNLGAAEEVERLAAMRSDSLVPGTHTPPIRRRSKFANLGRIFKPWKWRKKKSEKFKHTSAALERKISMRQSREELIKRGVLKEIYDKDGELSISNEDDSLENGQSLSSSQLSLPALSEMEPVPMPRDPCSYEVLQASDIMDGPDPGAPVKLPCLPVKLSPPLPPKKVLICMPVGGPELTLASYAAQKSSQQAVAQHHHTVLPSQMQHQLQYGSHGQHLPSSTGTLPMHPSGCRMIDELNKTLAMTMQRLESSEQRVPCSTSYHSSGLHSSDGITKAGPMGLPEIRQVPTVVIECDDNKENVPHEPDYEDSPCLYGREEEEEEEDEDDDASLYTSSLAMKVCRKDSLAIKLSNRPSKRELEEKNILPRQTDEERLELRQQIGTKLTRRLSQRPTAEELEQRNILKPRNEQEEQEEKREIKRRLTRKLSQRPTVEELRERKILIRFSDYVEVADAQDYDRRADKPWTRLTAADKAAIRKELNEFKSTEMEVHELSRHLTRFHRP</sequence>
<comment type="function">
    <text evidence="1 4 5 6">Binds actin monomers (G actin) and plays a role in multiple processes including the regulation of actin cytoskeleton dynamics, actin stress fibers formation, cell motility and survival, formation of tubules by endothelial cells, and regulation of PPP1CA activity. Involved in the regulation of cortical neuron migration and dendrite arborization (PubMed:30256902).</text>
</comment>
<comment type="subunit">
    <text evidence="4 5">Interacts (via RPEL repeats) with ACTA1 and PPP1CA; ACTA1 and PPP1CA compete for the same binding site.</text>
</comment>
<comment type="subcellular location">
    <subcellularLocation>
        <location>Cytoplasm</location>
    </subcellularLocation>
    <subcellularLocation>
        <location evidence="1">Synapse</location>
    </subcellularLocation>
    <subcellularLocation>
        <location>Nucleus</location>
    </subcellularLocation>
    <text evidence="1">Enriched at synapses (By similarity). Cytoplasmic in resting cells, and is imported into the nucleus upon serum stimulation. Interaction with actin prevents nuclear import.</text>
</comment>
<comment type="alternative products">
    <event type="alternative splicing"/>
    <isoform>
        <id>Q2M3X8-1</id>
        <name>1</name>
        <sequence type="displayed"/>
    </isoform>
    <isoform>
        <id>Q2M3X8-2</id>
        <name>2</name>
        <sequence type="described" ref="VSP_018559"/>
    </isoform>
    <isoform>
        <id>Q2M3X8-3</id>
        <name>3</name>
        <sequence type="described" ref="VSP_018559 VSP_018560"/>
    </isoform>
    <isoform>
        <id>Q2M3X8-4</id>
        <name>4</name>
        <sequence type="described" ref="VSP_018560"/>
    </isoform>
</comment>
<comment type="domain">
    <text evidence="5">Binds three actin monomers via the three C-terminal RPEL repeats.</text>
</comment>
<comment type="disruption phenotype">
    <text evidence="6">PHACTR1 knockdown results in migration defects of cortical neurons. Neurons do not migrate to layers II-IV of the cortical plate but remain in the lower part and the intermediate zone.</text>
</comment>
<comment type="similarity">
    <text evidence="9">Belongs to the phosphatase and actin regulator family.</text>
</comment>
<comment type="sequence caution" evidence="9">
    <conflict type="erroneous initiation">
        <sequence resource="EMBL-CDS" id="AAH48407"/>
    </conflict>
    <text>Extended N-terminus.</text>
</comment>
<comment type="sequence caution" evidence="9">
    <conflict type="erroneous initiation">
        <sequence resource="EMBL-CDS" id="AAH61691"/>
    </conflict>
    <text>Truncated N-terminus.</text>
</comment>
<comment type="sequence caution" evidence="9">
    <conflict type="erroneous initiation">
        <sequence resource="EMBL-CDS" id="BAC33272"/>
    </conflict>
    <text>Truncated N-terminus.</text>
</comment>
<organism>
    <name type="scientific">Mus musculus</name>
    <name type="common">Mouse</name>
    <dbReference type="NCBI Taxonomy" id="10090"/>
    <lineage>
        <taxon>Eukaryota</taxon>
        <taxon>Metazoa</taxon>
        <taxon>Chordata</taxon>
        <taxon>Craniata</taxon>
        <taxon>Vertebrata</taxon>
        <taxon>Euteleostomi</taxon>
        <taxon>Mammalia</taxon>
        <taxon>Eutheria</taxon>
        <taxon>Euarchontoglires</taxon>
        <taxon>Glires</taxon>
        <taxon>Rodentia</taxon>
        <taxon>Myomorpha</taxon>
        <taxon>Muroidea</taxon>
        <taxon>Muridae</taxon>
        <taxon>Murinae</taxon>
        <taxon>Mus</taxon>
        <taxon>Mus</taxon>
    </lineage>
</organism>
<name>PHAR1_MOUSE</name>
<evidence type="ECO:0000250" key="1"/>
<evidence type="ECO:0000250" key="2">
    <source>
        <dbReference type="UniProtKB" id="Q9C0D0"/>
    </source>
</evidence>
<evidence type="ECO:0000256" key="3">
    <source>
        <dbReference type="SAM" id="MobiDB-lite"/>
    </source>
</evidence>
<evidence type="ECO:0000269" key="4">
    <source>
    </source>
</evidence>
<evidence type="ECO:0000269" key="5">
    <source>
    </source>
</evidence>
<evidence type="ECO:0000269" key="6">
    <source>
    </source>
</evidence>
<evidence type="ECO:0000303" key="7">
    <source>
    </source>
</evidence>
<evidence type="ECO:0000303" key="8">
    <source>
    </source>
</evidence>
<evidence type="ECO:0000305" key="9"/>
<evidence type="ECO:0007744" key="10">
    <source>
    </source>
</evidence>
<evidence type="ECO:0007829" key="11">
    <source>
        <dbReference type="PDB" id="4B1V"/>
    </source>
</evidence>
<evidence type="ECO:0007829" key="12">
    <source>
        <dbReference type="PDB" id="4B1W"/>
    </source>
</evidence>
<evidence type="ECO:0007829" key="13">
    <source>
        <dbReference type="PDB" id="4B1X"/>
    </source>
</evidence>
<evidence type="ECO:0007829" key="14">
    <source>
        <dbReference type="PDB" id="4B1Y"/>
    </source>
</evidence>
<accession>Q2M3X8</accession>
<accession>B1B1B5</accession>
<accession>B1B1B6</accession>
<accession>B1B1B7</accession>
<accession>G5E8P7</accession>
<accession>Q80VL9</accession>
<accession>Q8C873</accession>
<gene>
    <name type="primary">Phactr1</name>
</gene>
<feature type="chain" id="PRO_0000235990" description="Phosphatase and actin regulator 1">
    <location>
        <begin position="1"/>
        <end position="580"/>
    </location>
</feature>
<feature type="repeat" description="RPEL 1">
    <location>
        <begin position="138"/>
        <end position="163"/>
    </location>
</feature>
<feature type="repeat" description="RPEL 2">
    <location>
        <begin position="422"/>
        <end position="447"/>
    </location>
</feature>
<feature type="repeat" description="RPEL 3">
    <location>
        <begin position="460"/>
        <end position="485"/>
    </location>
</feature>
<feature type="repeat" description="RPEL 4">
    <location>
        <begin position="498"/>
        <end position="523"/>
    </location>
</feature>
<feature type="region of interest" description="Disordered" evidence="3">
    <location>
        <begin position="330"/>
        <end position="350"/>
    </location>
</feature>
<feature type="region of interest" description="Disordered" evidence="3">
    <location>
        <begin position="374"/>
        <end position="408"/>
    </location>
</feature>
<feature type="region of interest" description="Disordered" evidence="3">
    <location>
        <begin position="463"/>
        <end position="494"/>
    </location>
</feature>
<feature type="short sequence motif" description="Nuclear localization signal">
    <location>
        <begin position="108"/>
        <end position="129"/>
    </location>
</feature>
<feature type="compositionally biased region" description="Low complexity" evidence="3">
    <location>
        <begin position="337"/>
        <end position="348"/>
    </location>
</feature>
<feature type="compositionally biased region" description="Basic and acidic residues" evidence="3">
    <location>
        <begin position="374"/>
        <end position="383"/>
    </location>
</feature>
<feature type="compositionally biased region" description="Acidic residues" evidence="3">
    <location>
        <begin position="395"/>
        <end position="407"/>
    </location>
</feature>
<feature type="compositionally biased region" description="Basic and acidic residues" evidence="3">
    <location>
        <begin position="471"/>
        <end position="494"/>
    </location>
</feature>
<feature type="modified residue" description="Phosphoserine" evidence="10">
    <location>
        <position position="67"/>
    </location>
</feature>
<feature type="modified residue" description="Phosphoserine" evidence="10">
    <location>
        <position position="78"/>
    </location>
</feature>
<feature type="modified residue" description="Phosphothreonine" evidence="10">
    <location>
        <position position="104"/>
    </location>
</feature>
<feature type="modified residue" description="Phosphoserine" evidence="2">
    <location>
        <position position="467"/>
    </location>
</feature>
<feature type="modified residue" description="Phosphoserine" evidence="2">
    <location>
        <position position="505"/>
    </location>
</feature>
<feature type="splice variant" id="VSP_018559" description="In isoform 2 and isoform 3." evidence="7 8">
    <original>MDYPKMDYFLDVESAHRLLDVESAQRFFYSQGAQ</original>
    <variation>MCVSLLLSPPPPFRLSPSPSLHLLLLS</variation>
    <location>
        <begin position="1"/>
        <end position="34"/>
    </location>
</feature>
<feature type="splice variant" id="VSP_018560" description="In isoform 3 and isoform 4." evidence="7 8">
    <original>P</original>
    <variation>PVSEESPSASESGVLLSQDPSAKPVLFLPPKKSAAFPGDHEETPVKQLSLHKQPPALPPKPTARIANHLT</variation>
    <location>
        <position position="221"/>
    </location>
</feature>
<feature type="mutagenesis site" description="Abolishes nuclear import.">
    <original>RRR</original>
    <variation>AAA</variation>
    <location>
        <begin position="108"/>
        <end position="110"/>
    </location>
</feature>
<feature type="mutagenesis site" description="Abolishes nuclear import.">
    <original>KKK</original>
    <variation>AAA</variation>
    <location>
        <begin position="127"/>
        <end position="129"/>
    </location>
</feature>
<feature type="mutagenesis site" description="Reduces affinity for actin." evidence="4">
    <original>R</original>
    <variation>A</variation>
    <location>
        <position position="147"/>
    </location>
</feature>
<feature type="mutagenesis site" description="Constitutively nuclear; when associated with A-469 and A-507. Strongly reduced affinity for actin." evidence="4">
    <original>R</original>
    <variation>A</variation>
    <location>
        <position position="431"/>
    </location>
</feature>
<feature type="mutagenesis site" description="Increases affinity for actin." evidence="5">
    <original>G</original>
    <variation>K</variation>
    <location>
        <position position="459"/>
    </location>
</feature>
<feature type="mutagenesis site" description="Constitutively nuclear; when associated with A-431 and A-507. Strongly reduced affinity for actin." evidence="4">
    <original>R</original>
    <variation>A</variation>
    <location>
        <position position="469"/>
    </location>
</feature>
<feature type="mutagenesis site" description="Does not rescue cortical neuron migration defects in PHACTR1 knocked-down mice." evidence="6">
    <original>N</original>
    <variation>I</variation>
    <location>
        <position position="479"/>
    </location>
</feature>
<feature type="mutagenesis site" description="Reduces affinity for actin." evidence="5">
    <original>I</original>
    <variation>A</variation>
    <location>
        <position position="496"/>
    </location>
</feature>
<feature type="mutagenesis site" description="Does not rescue cortical neuron migration defects in PHACTR1 knocked-down mice." evidence="6">
    <original>L</original>
    <variation>P</variation>
    <location>
        <position position="500"/>
    </location>
</feature>
<feature type="mutagenesis site" description="Constitutively nuclear; when associated with A-431 and A-469. Strongly reduced affinity for actin." evidence="4">
    <original>R</original>
    <variation>A</variation>
    <location>
        <position position="507"/>
    </location>
</feature>
<feature type="mutagenesis site" description="Reduces affinity for actin." evidence="5">
    <original>R</original>
    <variation>A</variation>
    <location>
        <position position="516"/>
    </location>
</feature>
<feature type="mutagenesis site" description="Does not rescue cortical neuron migration defects in PHACTR1 knocked-down mice." evidence="6">
    <original>I</original>
    <variation>N</variation>
    <location>
        <position position="518"/>
    </location>
</feature>
<feature type="mutagenesis site" description="Does not rescue cortical neuron migration defects in PHACTR1 knocked-down mice." evidence="6">
    <original>R</original>
    <variation>C</variation>
    <location>
        <position position="521"/>
    </location>
</feature>
<feature type="helix" evidence="11">
    <location>
        <begin position="138"/>
        <end position="145"/>
    </location>
</feature>
<feature type="helix" evidence="11">
    <location>
        <begin position="150"/>
        <end position="155"/>
    </location>
</feature>
<feature type="helix" evidence="12">
    <location>
        <begin position="422"/>
        <end position="429"/>
    </location>
</feature>
<feature type="helix" evidence="12">
    <location>
        <begin position="434"/>
        <end position="438"/>
    </location>
</feature>
<feature type="turn" evidence="12">
    <location>
        <begin position="439"/>
        <end position="441"/>
    </location>
</feature>
<feature type="helix" evidence="13">
    <location>
        <begin position="458"/>
        <end position="467"/>
    </location>
</feature>
<feature type="helix" evidence="13">
    <location>
        <begin position="472"/>
        <end position="477"/>
    </location>
</feature>
<feature type="helix" evidence="14">
    <location>
        <begin position="495"/>
        <end position="505"/>
    </location>
</feature>
<feature type="helix" evidence="14">
    <location>
        <begin position="510"/>
        <end position="515"/>
    </location>
</feature>
<proteinExistence type="evidence at protein level"/>
<reference key="1">
    <citation type="journal article" date="2006" name="Genomics">
        <title>Capucin: a novel striatal marker down-regulated in rodent models of Huntington disease.</title>
        <authorList>
            <person name="de Chaldee M."/>
            <person name="Brochier C."/>
            <person name="Van de Vel A."/>
            <person name="Caudy N."/>
            <person name="Luthi-Carter R."/>
            <person name="Gaillard M.-C."/>
            <person name="Elalouf J.-M."/>
        </authorList>
    </citation>
    <scope>NUCLEOTIDE SEQUENCE [MRNA] (ISOFORM 1)</scope>
    <source>
        <strain>C57BL/6J</strain>
        <tissue>Corpus striatum</tissue>
    </source>
</reference>
<reference key="2">
    <citation type="journal article" date="2009" name="PLoS Biol.">
        <title>Lineage-specific biology revealed by a finished genome assembly of the mouse.</title>
        <authorList>
            <person name="Church D.M."/>
            <person name="Goodstadt L."/>
            <person name="Hillier L.W."/>
            <person name="Zody M.C."/>
            <person name="Goldstein S."/>
            <person name="She X."/>
            <person name="Bult C.J."/>
            <person name="Agarwala R."/>
            <person name="Cherry J.L."/>
            <person name="DiCuccio M."/>
            <person name="Hlavina W."/>
            <person name="Kapustin Y."/>
            <person name="Meric P."/>
            <person name="Maglott D."/>
            <person name="Birtle Z."/>
            <person name="Marques A.C."/>
            <person name="Graves T."/>
            <person name="Zhou S."/>
            <person name="Teague B."/>
            <person name="Potamousis K."/>
            <person name="Churas C."/>
            <person name="Place M."/>
            <person name="Herschleb J."/>
            <person name="Runnheim R."/>
            <person name="Forrest D."/>
            <person name="Amos-Landgraf J."/>
            <person name="Schwartz D.C."/>
            <person name="Cheng Z."/>
            <person name="Lindblad-Toh K."/>
            <person name="Eichler E.E."/>
            <person name="Ponting C.P."/>
        </authorList>
    </citation>
    <scope>NUCLEOTIDE SEQUENCE [LARGE SCALE GENOMIC DNA]</scope>
    <source>
        <strain>C57BL/6J</strain>
    </source>
</reference>
<reference key="3">
    <citation type="submission" date="2005-07" db="EMBL/GenBank/DDBJ databases">
        <authorList>
            <person name="Mural R.J."/>
            <person name="Adams M.D."/>
            <person name="Myers E.W."/>
            <person name="Smith H.O."/>
            <person name="Venter J.C."/>
        </authorList>
    </citation>
    <scope>NUCLEOTIDE SEQUENCE [LARGE SCALE GENOMIC DNA] (ISOFORM 4)</scope>
</reference>
<reference key="4">
    <citation type="journal article" date="2004" name="Genome Res.">
        <title>The status, quality, and expansion of the NIH full-length cDNA project: the Mammalian Gene Collection (MGC).</title>
        <authorList>
            <consortium name="The MGC Project Team"/>
        </authorList>
    </citation>
    <scope>NUCLEOTIDE SEQUENCE [LARGE SCALE MRNA] (ISOFORMS 2 AND 3)</scope>
    <source>
        <tissue>Eye</tissue>
        <tissue>Olfactory epithelium</tissue>
    </source>
</reference>
<reference key="5">
    <citation type="journal article" date="2005" name="Science">
        <title>The transcriptional landscape of the mammalian genome.</title>
        <authorList>
            <person name="Carninci P."/>
            <person name="Kasukawa T."/>
            <person name="Katayama S."/>
            <person name="Gough J."/>
            <person name="Frith M.C."/>
            <person name="Maeda N."/>
            <person name="Oyama R."/>
            <person name="Ravasi T."/>
            <person name="Lenhard B."/>
            <person name="Wells C."/>
            <person name="Kodzius R."/>
            <person name="Shimokawa K."/>
            <person name="Bajic V.B."/>
            <person name="Brenner S.E."/>
            <person name="Batalov S."/>
            <person name="Forrest A.R."/>
            <person name="Zavolan M."/>
            <person name="Davis M.J."/>
            <person name="Wilming L.G."/>
            <person name="Aidinis V."/>
            <person name="Allen J.E."/>
            <person name="Ambesi-Impiombato A."/>
            <person name="Apweiler R."/>
            <person name="Aturaliya R.N."/>
            <person name="Bailey T.L."/>
            <person name="Bansal M."/>
            <person name="Baxter L."/>
            <person name="Beisel K.W."/>
            <person name="Bersano T."/>
            <person name="Bono H."/>
            <person name="Chalk A.M."/>
            <person name="Chiu K.P."/>
            <person name="Choudhary V."/>
            <person name="Christoffels A."/>
            <person name="Clutterbuck D.R."/>
            <person name="Crowe M.L."/>
            <person name="Dalla E."/>
            <person name="Dalrymple B.P."/>
            <person name="de Bono B."/>
            <person name="Della Gatta G."/>
            <person name="di Bernardo D."/>
            <person name="Down T."/>
            <person name="Engstrom P."/>
            <person name="Fagiolini M."/>
            <person name="Faulkner G."/>
            <person name="Fletcher C.F."/>
            <person name="Fukushima T."/>
            <person name="Furuno M."/>
            <person name="Futaki S."/>
            <person name="Gariboldi M."/>
            <person name="Georgii-Hemming P."/>
            <person name="Gingeras T.R."/>
            <person name="Gojobori T."/>
            <person name="Green R.E."/>
            <person name="Gustincich S."/>
            <person name="Harbers M."/>
            <person name="Hayashi Y."/>
            <person name="Hensch T.K."/>
            <person name="Hirokawa N."/>
            <person name="Hill D."/>
            <person name="Huminiecki L."/>
            <person name="Iacono M."/>
            <person name="Ikeo K."/>
            <person name="Iwama A."/>
            <person name="Ishikawa T."/>
            <person name="Jakt M."/>
            <person name="Kanapin A."/>
            <person name="Katoh M."/>
            <person name="Kawasawa Y."/>
            <person name="Kelso J."/>
            <person name="Kitamura H."/>
            <person name="Kitano H."/>
            <person name="Kollias G."/>
            <person name="Krishnan S.P."/>
            <person name="Kruger A."/>
            <person name="Kummerfeld S.K."/>
            <person name="Kurochkin I.V."/>
            <person name="Lareau L.F."/>
            <person name="Lazarevic D."/>
            <person name="Lipovich L."/>
            <person name="Liu J."/>
            <person name="Liuni S."/>
            <person name="McWilliam S."/>
            <person name="Madan Babu M."/>
            <person name="Madera M."/>
            <person name="Marchionni L."/>
            <person name="Matsuda H."/>
            <person name="Matsuzawa S."/>
            <person name="Miki H."/>
            <person name="Mignone F."/>
            <person name="Miyake S."/>
            <person name="Morris K."/>
            <person name="Mottagui-Tabar S."/>
            <person name="Mulder N."/>
            <person name="Nakano N."/>
            <person name="Nakauchi H."/>
            <person name="Ng P."/>
            <person name="Nilsson R."/>
            <person name="Nishiguchi S."/>
            <person name="Nishikawa S."/>
            <person name="Nori F."/>
            <person name="Ohara O."/>
            <person name="Okazaki Y."/>
            <person name="Orlando V."/>
            <person name="Pang K.C."/>
            <person name="Pavan W.J."/>
            <person name="Pavesi G."/>
            <person name="Pesole G."/>
            <person name="Petrovsky N."/>
            <person name="Piazza S."/>
            <person name="Reed J."/>
            <person name="Reid J.F."/>
            <person name="Ring B.Z."/>
            <person name="Ringwald M."/>
            <person name="Rost B."/>
            <person name="Ruan Y."/>
            <person name="Salzberg S.L."/>
            <person name="Sandelin A."/>
            <person name="Schneider C."/>
            <person name="Schoenbach C."/>
            <person name="Sekiguchi K."/>
            <person name="Semple C.A."/>
            <person name="Seno S."/>
            <person name="Sessa L."/>
            <person name="Sheng Y."/>
            <person name="Shibata Y."/>
            <person name="Shimada H."/>
            <person name="Shimada K."/>
            <person name="Silva D."/>
            <person name="Sinclair B."/>
            <person name="Sperling S."/>
            <person name="Stupka E."/>
            <person name="Sugiura K."/>
            <person name="Sultana R."/>
            <person name="Takenaka Y."/>
            <person name="Taki K."/>
            <person name="Tammoja K."/>
            <person name="Tan S.L."/>
            <person name="Tang S."/>
            <person name="Taylor M.S."/>
            <person name="Tegner J."/>
            <person name="Teichmann S.A."/>
            <person name="Ueda H.R."/>
            <person name="van Nimwegen E."/>
            <person name="Verardo R."/>
            <person name="Wei C.L."/>
            <person name="Yagi K."/>
            <person name="Yamanishi H."/>
            <person name="Zabarovsky E."/>
            <person name="Zhu S."/>
            <person name="Zimmer A."/>
            <person name="Hide W."/>
            <person name="Bult C."/>
            <person name="Grimmond S.M."/>
            <person name="Teasdale R.D."/>
            <person name="Liu E.T."/>
            <person name="Brusic V."/>
            <person name="Quackenbush J."/>
            <person name="Wahlestedt C."/>
            <person name="Mattick J.S."/>
            <person name="Hume D.A."/>
            <person name="Kai C."/>
            <person name="Sasaki D."/>
            <person name="Tomaru Y."/>
            <person name="Fukuda S."/>
            <person name="Kanamori-Katayama M."/>
            <person name="Suzuki M."/>
            <person name="Aoki J."/>
            <person name="Arakawa T."/>
            <person name="Iida J."/>
            <person name="Imamura K."/>
            <person name="Itoh M."/>
            <person name="Kato T."/>
            <person name="Kawaji H."/>
            <person name="Kawagashira N."/>
            <person name="Kawashima T."/>
            <person name="Kojima M."/>
            <person name="Kondo S."/>
            <person name="Konno H."/>
            <person name="Nakano K."/>
            <person name="Ninomiya N."/>
            <person name="Nishio T."/>
            <person name="Okada M."/>
            <person name="Plessy C."/>
            <person name="Shibata K."/>
            <person name="Shiraki T."/>
            <person name="Suzuki S."/>
            <person name="Tagami M."/>
            <person name="Waki K."/>
            <person name="Watahiki A."/>
            <person name="Okamura-Oho Y."/>
            <person name="Suzuki H."/>
            <person name="Kawai J."/>
            <person name="Hayashizaki Y."/>
        </authorList>
    </citation>
    <scope>NUCLEOTIDE SEQUENCE [LARGE SCALE MRNA] OF 30-580 (ISOFORM 3)</scope>
    <source>
        <strain>C57BL/6J</strain>
        <tissue>Head</tissue>
    </source>
</reference>
<reference key="6">
    <citation type="journal article" date="2010" name="Cell">
        <title>A tissue-specific atlas of mouse protein phosphorylation and expression.</title>
        <authorList>
            <person name="Huttlin E.L."/>
            <person name="Jedrychowski M.P."/>
            <person name="Elias J.E."/>
            <person name="Goswami T."/>
            <person name="Rad R."/>
            <person name="Beausoleil S.A."/>
            <person name="Villen J."/>
            <person name="Haas W."/>
            <person name="Sowa M.E."/>
            <person name="Gygi S.P."/>
        </authorList>
    </citation>
    <scope>PHOSPHORYLATION [LARGE SCALE ANALYSIS] AT SER-67; SER-78 AND THR-104</scope>
    <scope>IDENTIFICATION BY MASS SPECTROMETRY [LARGE SCALE ANALYSIS]</scope>
    <source>
        <tissue>Brain</tissue>
        <tissue>Kidney</tissue>
    </source>
</reference>
<reference key="7">
    <citation type="journal article" date="2012" name="J. Cell Sci.">
        <title>G-actin regulates the shuttling and PP1 binding of the RPEL protein Phactr1 to control actomyosin assembly.</title>
        <authorList>
            <person name="Wiezlak M."/>
            <person name="Diring J."/>
            <person name="Abella J."/>
            <person name="Mouilleron S."/>
            <person name="Way M."/>
            <person name="McDonald N.Q."/>
            <person name="Treisman R."/>
        </authorList>
    </citation>
    <scope>FUNCTION</scope>
    <scope>INTERACTION WITH PPP1CA AND ACTA1</scope>
    <scope>SUBCELLULAR LOCATION</scope>
    <scope>MUTAGENESIS OF 108-ARG--LYS-129; ARG-147; ARG-431; ARG-469 AND ARG-507</scope>
</reference>
<reference key="8">
    <citation type="journal article" date="2018" name="Brain">
        <title>De novo PHACTR1 mutations in West syndrome and their pathophysiological effects.</title>
        <authorList>
            <person name="Hamada N."/>
            <person name="Ogaya S."/>
            <person name="Nakashima M."/>
            <person name="Nishijo T."/>
            <person name="Sugawara Y."/>
            <person name="Iwamoto I."/>
            <person name="Ito H."/>
            <person name="Maki Y."/>
            <person name="Shirai K."/>
            <person name="Baba S."/>
            <person name="Maruyama K."/>
            <person name="Saitsu H."/>
            <person name="Kato M."/>
            <person name="Matsumoto N."/>
            <person name="Momiyama T."/>
            <person name="Nagata K.I."/>
        </authorList>
    </citation>
    <scope>FUNCTION</scope>
    <scope>DISRUPTION PHENOTYPE</scope>
    <scope>MUTAGENESIS OF ASN-479; LEU-500; ILE-518 AND ARG-521</scope>
</reference>
<reference key="9">
    <citation type="journal article" date="2012" name="Structure">
        <title>Structures of the Phactr1 RPEL domain and RPEL motif complexes with G-actin reveal the molecular basis for actin binding cooperativity.</title>
        <authorList>
            <person name="Mouilleron S."/>
            <person name="Wiezlak M."/>
            <person name="O'Reilly N."/>
            <person name="Treisman R."/>
            <person name="McDonald N.Q."/>
        </authorList>
    </citation>
    <scope>X-RAY CRYSTALLOGRAPHY (1.75 ANGSTROMS) OF 133-164 AND 414-528 IN COMPLEXES WITH ACTA1</scope>
    <scope>FUNCTION</scope>
    <scope>SUBUNIT</scope>
    <scope>SUBCELLULAR LOCATION</scope>
    <scope>DOMAIN</scope>
    <scope>MUTAGENESIS OF GLY-459; ILE-496 AND ARG-516</scope>
    <scope>IDENTIFICATION BY MASS SPECTROMETRY</scope>
</reference>
<keyword id="KW-0002">3D-structure</keyword>
<keyword id="KW-0009">Actin-binding</keyword>
<keyword id="KW-0025">Alternative splicing</keyword>
<keyword id="KW-0963">Cytoplasm</keyword>
<keyword id="KW-0539">Nucleus</keyword>
<keyword id="KW-0597">Phosphoprotein</keyword>
<keyword id="KW-0650">Protein phosphatase inhibitor</keyword>
<keyword id="KW-1185">Reference proteome</keyword>
<keyword id="KW-0677">Repeat</keyword>
<keyword id="KW-0770">Synapse</keyword>